<dbReference type="EMBL" id="AL772205">
    <property type="status" value="NOT_ANNOTATED_CDS"/>
    <property type="molecule type" value="Genomic_DNA"/>
</dbReference>
<dbReference type="EMBL" id="AL935129">
    <property type="status" value="NOT_ANNOTATED_CDS"/>
    <property type="molecule type" value="Genomic_DNA"/>
</dbReference>
<dbReference type="EMBL" id="CH466519">
    <property type="protein sequence ID" value="EDL28399.1"/>
    <property type="molecule type" value="Genomic_DNA"/>
</dbReference>
<dbReference type="EMBL" id="BC018174">
    <property type="protein sequence ID" value="AAH18174.1"/>
    <property type="molecule type" value="mRNA"/>
</dbReference>
<dbReference type="EMBL" id="BC062968">
    <property type="protein sequence ID" value="AAH62968.1"/>
    <property type="molecule type" value="mRNA"/>
</dbReference>
<dbReference type="CCDS" id="CCDS16798.1"/>
<dbReference type="RefSeq" id="NP_001020602.1">
    <property type="nucleotide sequence ID" value="NM_001025431.1"/>
</dbReference>
<dbReference type="RefSeq" id="NP_663509.2">
    <property type="nucleotide sequence ID" value="NM_145534.2"/>
</dbReference>
<dbReference type="SMR" id="P58545"/>
<dbReference type="BioGRID" id="230751">
    <property type="interactions" value="2"/>
</dbReference>
<dbReference type="FunCoup" id="P58545">
    <property type="interactions" value="3739"/>
</dbReference>
<dbReference type="STRING" id="10090.ENSMUSP00000074864"/>
<dbReference type="iPTMnet" id="P58545"/>
<dbReference type="PhosphoSitePlus" id="P58545"/>
<dbReference type="PaxDb" id="10090-ENSMUSP00000074864"/>
<dbReference type="ProteomicsDB" id="273710"/>
<dbReference type="Antibodypedia" id="8935">
    <property type="antibodies" value="148 antibodies from 23 providers"/>
</dbReference>
<dbReference type="DNASU" id="228662"/>
<dbReference type="Ensembl" id="ENSMUST00000075410.5">
    <property type="protein sequence ID" value="ENSMUSP00000074864.5"/>
    <property type="gene ID" value="ENSMUSG00000062098.12"/>
</dbReference>
<dbReference type="GeneID" id="228662"/>
<dbReference type="KEGG" id="mmu:228662"/>
<dbReference type="UCSC" id="uc008mpa.1">
    <property type="organism name" value="mouse"/>
</dbReference>
<dbReference type="AGR" id="MGI:2385155"/>
<dbReference type="CTD" id="22903"/>
<dbReference type="MGI" id="MGI:2385155">
    <property type="gene designation" value="Btbd3"/>
</dbReference>
<dbReference type="VEuPathDB" id="HostDB:ENSMUSG00000062098"/>
<dbReference type="eggNOG" id="KOG2075">
    <property type="taxonomic scope" value="Eukaryota"/>
</dbReference>
<dbReference type="GeneTree" id="ENSGT00940000156461"/>
<dbReference type="InParanoid" id="P58545"/>
<dbReference type="OrthoDB" id="636773at2759"/>
<dbReference type="PhylomeDB" id="P58545"/>
<dbReference type="TreeFam" id="TF106482"/>
<dbReference type="BioGRID-ORCS" id="228662">
    <property type="hits" value="2 hits in 75 CRISPR screens"/>
</dbReference>
<dbReference type="ChiTaRS" id="Btbd3">
    <property type="organism name" value="mouse"/>
</dbReference>
<dbReference type="PRO" id="PR:P58545"/>
<dbReference type="Proteomes" id="UP000000589">
    <property type="component" value="Chromosome 2"/>
</dbReference>
<dbReference type="RNAct" id="P58545">
    <property type="molecule type" value="protein"/>
</dbReference>
<dbReference type="Bgee" id="ENSMUSG00000062098">
    <property type="expression patterns" value="Expressed in cerebellum lobe and 272 other cell types or tissues"/>
</dbReference>
<dbReference type="ExpressionAtlas" id="P58545">
    <property type="expression patterns" value="baseline and differential"/>
</dbReference>
<dbReference type="GO" id="GO:0005829">
    <property type="term" value="C:cytosol"/>
    <property type="evidence" value="ECO:0000314"/>
    <property type="project" value="UniProtKB"/>
</dbReference>
<dbReference type="GO" id="GO:0005634">
    <property type="term" value="C:nucleus"/>
    <property type="evidence" value="ECO:0000314"/>
    <property type="project" value="UniProtKB"/>
</dbReference>
<dbReference type="GO" id="GO:0021987">
    <property type="term" value="P:cerebral cortex development"/>
    <property type="evidence" value="ECO:0000315"/>
    <property type="project" value="UniProtKB"/>
</dbReference>
<dbReference type="GO" id="GO:0048813">
    <property type="term" value="P:dendrite morphogenesis"/>
    <property type="evidence" value="ECO:0000314"/>
    <property type="project" value="UniProtKB"/>
</dbReference>
<dbReference type="CDD" id="cd18524">
    <property type="entry name" value="BACK_BTBD3"/>
    <property type="match status" value="1"/>
</dbReference>
<dbReference type="CDD" id="cd18348">
    <property type="entry name" value="BTB_POZ_BTBD3"/>
    <property type="match status" value="1"/>
</dbReference>
<dbReference type="FunFam" id="1.25.40.420:FF:000003">
    <property type="entry name" value="BTB/POZ domain-containing protein 3"/>
    <property type="match status" value="1"/>
</dbReference>
<dbReference type="FunFam" id="2.60.120.820:FF:000001">
    <property type="entry name" value="BTB/POZ domain-containing protein 3"/>
    <property type="match status" value="1"/>
</dbReference>
<dbReference type="FunFam" id="3.30.710.10:FF:000015">
    <property type="entry name" value="BTB/POZ domain-containing protein 3"/>
    <property type="match status" value="1"/>
</dbReference>
<dbReference type="Gene3D" id="1.25.40.420">
    <property type="match status" value="1"/>
</dbReference>
<dbReference type="Gene3D" id="2.60.120.820">
    <property type="entry name" value="PHR domain"/>
    <property type="match status" value="1"/>
</dbReference>
<dbReference type="Gene3D" id="3.30.710.10">
    <property type="entry name" value="Potassium Channel Kv1.1, Chain A"/>
    <property type="match status" value="1"/>
</dbReference>
<dbReference type="InterPro" id="IPR011705">
    <property type="entry name" value="BACK"/>
</dbReference>
<dbReference type="InterPro" id="IPR000210">
    <property type="entry name" value="BTB/POZ_dom"/>
</dbReference>
<dbReference type="InterPro" id="IPR012983">
    <property type="entry name" value="PHR"/>
</dbReference>
<dbReference type="InterPro" id="IPR038648">
    <property type="entry name" value="PHR_sf"/>
</dbReference>
<dbReference type="InterPro" id="IPR011333">
    <property type="entry name" value="SKP1/BTB/POZ_sf"/>
</dbReference>
<dbReference type="PANTHER" id="PTHR45774">
    <property type="entry name" value="BTB/POZ DOMAIN-CONTAINING"/>
    <property type="match status" value="1"/>
</dbReference>
<dbReference type="PANTHER" id="PTHR45774:SF2">
    <property type="entry name" value="BTB_POZ DOMAIN-CONTAINING PROTEIN 3"/>
    <property type="match status" value="1"/>
</dbReference>
<dbReference type="Pfam" id="PF07707">
    <property type="entry name" value="BACK"/>
    <property type="match status" value="1"/>
</dbReference>
<dbReference type="Pfam" id="PF00651">
    <property type="entry name" value="BTB"/>
    <property type="match status" value="1"/>
</dbReference>
<dbReference type="Pfam" id="PF08005">
    <property type="entry name" value="PHR"/>
    <property type="match status" value="1"/>
</dbReference>
<dbReference type="SMART" id="SM00875">
    <property type="entry name" value="BACK"/>
    <property type="match status" value="1"/>
</dbReference>
<dbReference type="SMART" id="SM00225">
    <property type="entry name" value="BTB"/>
    <property type="match status" value="1"/>
</dbReference>
<dbReference type="SUPFAM" id="SSF54695">
    <property type="entry name" value="POZ domain"/>
    <property type="match status" value="1"/>
</dbReference>
<dbReference type="PROSITE" id="PS50097">
    <property type="entry name" value="BTB"/>
    <property type="match status" value="1"/>
</dbReference>
<gene>
    <name type="primary">Btbd3</name>
</gene>
<reference key="1">
    <citation type="journal article" date="2009" name="PLoS Biol.">
        <title>Lineage-specific biology revealed by a finished genome assembly of the mouse.</title>
        <authorList>
            <person name="Church D.M."/>
            <person name="Goodstadt L."/>
            <person name="Hillier L.W."/>
            <person name="Zody M.C."/>
            <person name="Goldstein S."/>
            <person name="She X."/>
            <person name="Bult C.J."/>
            <person name="Agarwala R."/>
            <person name="Cherry J.L."/>
            <person name="DiCuccio M."/>
            <person name="Hlavina W."/>
            <person name="Kapustin Y."/>
            <person name="Meric P."/>
            <person name="Maglott D."/>
            <person name="Birtle Z."/>
            <person name="Marques A.C."/>
            <person name="Graves T."/>
            <person name="Zhou S."/>
            <person name="Teague B."/>
            <person name="Potamousis K."/>
            <person name="Churas C."/>
            <person name="Place M."/>
            <person name="Herschleb J."/>
            <person name="Runnheim R."/>
            <person name="Forrest D."/>
            <person name="Amos-Landgraf J."/>
            <person name="Schwartz D.C."/>
            <person name="Cheng Z."/>
            <person name="Lindblad-Toh K."/>
            <person name="Eichler E.E."/>
            <person name="Ponting C.P."/>
        </authorList>
    </citation>
    <scope>NUCLEOTIDE SEQUENCE [LARGE SCALE GENOMIC DNA]</scope>
    <source>
        <strain>C57BL/6J</strain>
    </source>
</reference>
<reference key="2">
    <citation type="submission" date="2005-07" db="EMBL/GenBank/DDBJ databases">
        <authorList>
            <person name="Mural R.J."/>
            <person name="Adams M.D."/>
            <person name="Myers E.W."/>
            <person name="Smith H.O."/>
            <person name="Venter J.C."/>
        </authorList>
    </citation>
    <scope>NUCLEOTIDE SEQUENCE [LARGE SCALE GENOMIC DNA]</scope>
</reference>
<reference key="3">
    <citation type="journal article" date="2004" name="Genome Res.">
        <title>The status, quality, and expansion of the NIH full-length cDNA project: the Mammalian Gene Collection (MGC).</title>
        <authorList>
            <consortium name="The MGC Project Team"/>
        </authorList>
    </citation>
    <scope>NUCLEOTIDE SEQUENCE [LARGE SCALE MRNA]</scope>
</reference>
<reference key="4">
    <citation type="journal article" date="2013" name="Science">
        <title>BTBD3 controls dendrite orientation toward active axons in mammalian neocortex.</title>
        <authorList>
            <person name="Matsui A."/>
            <person name="Tran M."/>
            <person name="Yoshida A.C."/>
            <person name="Kikuchi S.S."/>
            <person name="U M."/>
            <person name="Ogawa M."/>
            <person name="Shimogori T."/>
        </authorList>
    </citation>
    <scope>FUNCTION</scope>
    <scope>SUBCELLULAR LOCATION</scope>
    <scope>TISSUE SPECIFICITY</scope>
    <scope>DEVELOPMENTAL STAGE</scope>
</reference>
<keyword id="KW-0963">Cytoplasm</keyword>
<keyword id="KW-0524">Neurogenesis</keyword>
<keyword id="KW-0539">Nucleus</keyword>
<keyword id="KW-1185">Reference proteome</keyword>
<protein>
    <recommendedName>
        <fullName>BTB/POZ domain-containing protein 3</fullName>
    </recommendedName>
</protein>
<feature type="chain" id="PRO_0000186212" description="BTB/POZ domain-containing protein 3">
    <location>
        <begin position="1"/>
        <end position="530"/>
    </location>
</feature>
<feature type="domain" description="BTB" evidence="1">
    <location>
        <begin position="128"/>
        <end position="198"/>
    </location>
</feature>
<feature type="domain" description="BACK">
    <location>
        <begin position="243"/>
        <end position="308"/>
    </location>
</feature>
<feature type="region of interest" description="Disordered" evidence="2">
    <location>
        <begin position="23"/>
        <end position="48"/>
    </location>
</feature>
<feature type="compositionally biased region" description="Gly residues" evidence="2">
    <location>
        <begin position="36"/>
        <end position="46"/>
    </location>
</feature>
<feature type="sequence conflict" description="In Ref. 1; AAH18174." evidence="4" ref="1">
    <original>Q</original>
    <variation>QQH</variation>
    <location>
        <position position="90"/>
    </location>
</feature>
<organism>
    <name type="scientific">Mus musculus</name>
    <name type="common">Mouse</name>
    <dbReference type="NCBI Taxonomy" id="10090"/>
    <lineage>
        <taxon>Eukaryota</taxon>
        <taxon>Metazoa</taxon>
        <taxon>Chordata</taxon>
        <taxon>Craniata</taxon>
        <taxon>Vertebrata</taxon>
        <taxon>Euteleostomi</taxon>
        <taxon>Mammalia</taxon>
        <taxon>Eutheria</taxon>
        <taxon>Euarchontoglires</taxon>
        <taxon>Glires</taxon>
        <taxon>Rodentia</taxon>
        <taxon>Myomorpha</taxon>
        <taxon>Muroidea</taxon>
        <taxon>Muridae</taxon>
        <taxon>Murinae</taxon>
        <taxon>Mus</taxon>
        <taxon>Mus</taxon>
    </lineage>
</organism>
<accession>P58545</accession>
<accession>Q6P5B8</accession>
<evidence type="ECO:0000255" key="1">
    <source>
        <dbReference type="PROSITE-ProRule" id="PRU00037"/>
    </source>
</evidence>
<evidence type="ECO:0000256" key="2">
    <source>
        <dbReference type="SAM" id="MobiDB-lite"/>
    </source>
</evidence>
<evidence type="ECO:0000269" key="3">
    <source>
    </source>
</evidence>
<evidence type="ECO:0000305" key="4"/>
<proteinExistence type="evidence at transcript level"/>
<sequence length="530" mass="58802">MVDDKEKNMKCLTFFLMLPETVKNRSKKGSKKANSSGGGGGGGSVGSGSSKLPPVCYEIITLKTKKKKKMAADIFPRKKPANSSSTTVQQQHQHNLCNNNLIPAPNWQGLYPTIRERNAVMFNNDLMADVHFVVGPPGGTQRLPGHKYVLAVGSSVFHAMFYGELAEDKDEIRIPDVEPAAFLAMLKYIYCDEIDLAADTVLATLYAAKKYIVPHLARACVNFLETSLSAKNACVLLSQSCLFEEPDLTQRCWEVIDAQAELALKSEGFCDIDFQTLESILRRETLNAKEIVVFEAALNWAEVECQRQDLALSIENKRKVLGKALYLIRIPTMALDDFANGAAQSGVLTLNETNDIFLWYTASKKPELQFVSKARKGLVPQRCHRFQSCAYRSNQWRYRGRCDSIQFAVDKRVFIAGFGLYGSSCGSAEYSAKIELKRQGVVLGQNLSKYFSDGSSNTFPVWFEYPVQIEPDTFYTASVVLDGNELSYFGQEGMTEVQCGKVTVQFQCSSDSTNGTGVQGGQIPELIFYA</sequence>
<comment type="function">
    <text evidence="3">Acts as a key regulator of dendritic field orientation during development of sensory cortex. Also directs dendrites toward active axon terminals when ectopically expressed.</text>
</comment>
<comment type="subcellular location">
    <subcellularLocation>
        <location evidence="3">Cytoplasm</location>
        <location evidence="3">Cytosol</location>
    </subcellularLocation>
    <subcellularLocation>
        <location evidence="3">Nucleus</location>
    </subcellularLocation>
    <text>Translocates from the cytosol to the nucleus in response to neuronal activity.</text>
</comment>
<comment type="tissue specificity">
    <text evidence="3">In the somatosensory cortex, specifically expressed in spiny stellate neurons during barrel formation. Also expressed in the olfactory bulb, piriform cortex and hippocampus.</text>
</comment>
<comment type="developmental stage">
    <text evidence="3">Not expressed in early postnatal somatosensory cortex at postnatal day 1 (P1): weakly expressed at P2, coincident with innervation by thalamocortical axons into layer IV cortex, followed by a barrel-like expression pattern established over the next few days.</text>
</comment>
<name>BTBD3_MOUSE</name>